<keyword id="KW-0274">FAD</keyword>
<keyword id="KW-0285">Flavoprotein</keyword>
<keyword id="KW-0472">Membrane</keyword>
<keyword id="KW-0521">NADP</keyword>
<keyword id="KW-0547">Nucleotide-binding</keyword>
<keyword id="KW-0560">Oxidoreductase</keyword>
<keyword id="KW-0812">Transmembrane</keyword>
<keyword id="KW-1133">Transmembrane helix</keyword>
<feature type="chain" id="PRO_0000449183" description="FAD-dependent monooxygenase asL6">
    <location>
        <begin position="1"/>
        <end position="423"/>
    </location>
</feature>
<feature type="transmembrane region" description="Helical" evidence="2">
    <location>
        <begin position="371"/>
        <end position="391"/>
    </location>
</feature>
<feature type="binding site" evidence="1">
    <location>
        <begin position="10"/>
        <end position="13"/>
    </location>
    <ligand>
        <name>FAD</name>
        <dbReference type="ChEBI" id="CHEBI:57692"/>
    </ligand>
</feature>
<feature type="binding site" evidence="1">
    <location>
        <begin position="34"/>
        <end position="35"/>
    </location>
    <ligand>
        <name>FAD</name>
        <dbReference type="ChEBI" id="CHEBI:57692"/>
    </ligand>
</feature>
<feature type="binding site" evidence="1">
    <location>
        <position position="108"/>
    </location>
    <ligand>
        <name>FAD</name>
        <dbReference type="ChEBI" id="CHEBI:57692"/>
    </ligand>
</feature>
<feature type="binding site" evidence="1">
    <location>
        <position position="290"/>
    </location>
    <ligand>
        <name>FAD</name>
        <dbReference type="ChEBI" id="CHEBI:57692"/>
    </ligand>
</feature>
<feature type="binding site" evidence="1">
    <location>
        <position position="312"/>
    </location>
    <ligand>
        <name>FAD</name>
        <dbReference type="ChEBI" id="CHEBI:57692"/>
    </ligand>
</feature>
<accession>A0A2U8U2L0</accession>
<reference key="1">
    <citation type="journal article" date="2018" name="Nat. Commun.">
        <title>Three previously unrecognised classes of biosynthetic enzymes revealed during the production of xenovulene A.</title>
        <authorList>
            <person name="Schor R."/>
            <person name="Schotte C."/>
            <person name="Wibberg D."/>
            <person name="Kalinowski J."/>
            <person name="Cox R.J."/>
        </authorList>
    </citation>
    <scope>NUCLEOTIDE SEQUENCE [GENOMIC DNA]</scope>
    <scope>INDUCTION</scope>
    <scope>FUNCTION</scope>
    <scope>DISRUPTION PHENOTYPE</scope>
    <scope>PATHWAY</scope>
</reference>
<reference key="2">
    <citation type="journal article" date="1997" name="J. Pharmacol. Exp. Ther.">
        <title>Regulation of neuronal and recombinant GABA(A) receptor ion channels by xenovulene A, a natural product isolated from Acremonium strictum.</title>
        <authorList>
            <person name="Thomas P."/>
            <person name="Sundaram H."/>
            <person name="Krishek B.J."/>
            <person name="Chazot P."/>
            <person name="Xie X."/>
            <person name="Bevan P."/>
            <person name="Brocchini S.J."/>
            <person name="Latham C.J."/>
            <person name="Charlton P."/>
            <person name="Moore M."/>
            <person name="Lewis S.J."/>
            <person name="Thornton D.M."/>
            <person name="Stephenson F.A."/>
            <person name="Smart T.G."/>
        </authorList>
    </citation>
    <scope>BIOTECHNOLOGY</scope>
</reference>
<reference key="3">
    <citation type="journal article" date="2007" name="Chem. Commun. (Camb.)">
        <title>Characterisation of 3-methylorcinaldehyde synthase (MOS) in Acremonium strictum: first observation of a reductive release mechanism during polyketide biosynthesis.</title>
        <authorList>
            <person name="Bailey A.M."/>
            <person name="Cox R.J."/>
            <person name="Harley K."/>
            <person name="Lazarus C.M."/>
            <person name="Simpson T.J."/>
            <person name="Skellam E."/>
        </authorList>
    </citation>
    <scope>FUNCTION</scope>
</reference>
<reference key="4">
    <citation type="journal article" date="2010" name="Chem. Commun. (Camb.)">
        <title>Catalytic role of the C-terminal domains of a fungal non-reducing polyketide synthase.</title>
        <authorList>
            <person name="Fisch K.M."/>
            <person name="Skellam E."/>
            <person name="Ivison D."/>
            <person name="Cox R.J."/>
            <person name="Bailey A.M."/>
            <person name="Lazarus C.M."/>
            <person name="Simpson T.J."/>
        </authorList>
    </citation>
    <scope>FUNCTION</scope>
</reference>
<dbReference type="EC" id="1.14.13.-" evidence="9"/>
<dbReference type="EMBL" id="MG736817">
    <property type="protein sequence ID" value="AWM95784.1"/>
    <property type="molecule type" value="Genomic_DNA"/>
</dbReference>
<dbReference type="SMR" id="A0A2U8U2L0"/>
<dbReference type="UniPathway" id="UPA00213"/>
<dbReference type="GO" id="GO:0016020">
    <property type="term" value="C:membrane"/>
    <property type="evidence" value="ECO:0007669"/>
    <property type="project" value="UniProtKB-SubCell"/>
</dbReference>
<dbReference type="GO" id="GO:0071949">
    <property type="term" value="F:FAD binding"/>
    <property type="evidence" value="ECO:0007669"/>
    <property type="project" value="InterPro"/>
</dbReference>
<dbReference type="GO" id="GO:0016491">
    <property type="term" value="F:oxidoreductase activity"/>
    <property type="evidence" value="ECO:0007669"/>
    <property type="project" value="UniProtKB-KW"/>
</dbReference>
<dbReference type="GO" id="GO:0016114">
    <property type="term" value="P:terpenoid biosynthetic process"/>
    <property type="evidence" value="ECO:0007669"/>
    <property type="project" value="UniProtKB-UniPathway"/>
</dbReference>
<dbReference type="Gene3D" id="3.50.50.60">
    <property type="entry name" value="FAD/NAD(P)-binding domain"/>
    <property type="match status" value="1"/>
</dbReference>
<dbReference type="InterPro" id="IPR002938">
    <property type="entry name" value="FAD-bd"/>
</dbReference>
<dbReference type="InterPro" id="IPR036188">
    <property type="entry name" value="FAD/NAD-bd_sf"/>
</dbReference>
<dbReference type="InterPro" id="IPR051704">
    <property type="entry name" value="FAD_aromatic-hydroxylase"/>
</dbReference>
<dbReference type="PANTHER" id="PTHR46865:SF7">
    <property type="entry name" value="MONOOXYGENASE, PUTATIVE (AFU_ORTHOLOGUE AFUA_8G07040)-RELATED"/>
    <property type="match status" value="1"/>
</dbReference>
<dbReference type="PANTHER" id="PTHR46865">
    <property type="entry name" value="OXIDOREDUCTASE-RELATED"/>
    <property type="match status" value="1"/>
</dbReference>
<dbReference type="Pfam" id="PF01494">
    <property type="entry name" value="FAD_binding_3"/>
    <property type="match status" value="1"/>
</dbReference>
<dbReference type="PRINTS" id="PR00420">
    <property type="entry name" value="RNGMNOXGNASE"/>
</dbReference>
<dbReference type="SUPFAM" id="SSF51905">
    <property type="entry name" value="FAD/NAD(P)-binding domain"/>
    <property type="match status" value="1"/>
</dbReference>
<comment type="function">
    <text evidence="3 4 5">FAD-dependent monooxygenase; part of the gene cluster that mediates the biosynthesis of xenovulene A, an unusual meroterpenoid that has potent inhibitory effects on the human gamma-aminobutyrate A (GABAA) benzodiazepine receptor (PubMed:29773797). The first step of xenovulene A biosynthesis is the biosynthesis of 3-methylorcinaldehyde performed by the non-reducing polyketide synthase aspks1 (PubMed:17912413, PubMed:20552126, PubMed:29773797). The salicylate hydroxylase asL1 then catalyzes the oxidative dearomatization of 3-methylorcinaldehyde to yield a dearomatized hydroxycyclohexadione (PubMed:29773797). The 2-oxoglutarate-dependent dioxygenase asL3 further catalyzes the oxidative ring expansion to provide the first tropolone metabolite (PubMed:29773797). The cytochrome P450 monooxygenase asR2 allows the synthesis of tropolone hemiacetal (PubMed:29773797). In parallel, a previously unrecognised class of terpene cyclase, asR6, produces alpha-humulene from farnesylpyrophosphate (FPP) (PubMed:29773797). The putative Diels-Alderase asR5 probably catalyzes the formation of the tropolone-humulene skeleton by linking humulene and the polyketide moiety (PubMed:29773797). Oxidative-ring contractions catalyzed by asL4 and asL6 then processively remove carbon atoms from the polyketide to yield xenovulene A (PubMed:29773797).</text>
</comment>
<comment type="cofactor">
    <cofactor evidence="1">
        <name>FAD</name>
        <dbReference type="ChEBI" id="CHEBI:57692"/>
    </cofactor>
    <text evidence="1">Binds 1 FAD per subunit.</text>
</comment>
<comment type="pathway">
    <text evidence="5">Secondary metabolite biosynthesis; terpenoid biosynthesis.</text>
</comment>
<comment type="subcellular location">
    <subcellularLocation>
        <location evidence="2">Membrane</location>
        <topology evidence="2">Single-pass membrane protein</topology>
    </subcellularLocation>
</comment>
<comment type="induction">
    <text evidence="5">Expression is significantly up-regulated under xenovulene A producing condition.</text>
</comment>
<comment type="disruption phenotype">
    <text evidence="5">Severely reduces, but does not abolish xenovulene A biosynthesis.</text>
</comment>
<comment type="biotechnology">
    <text evidence="6">Xenovulene A is a natural product exhibiting little structural resemblance with classical benzodiazepines yet is able to displace high-affinity ligand binding to the benzodiazepine site of the gamma-aminobutyrate A (GABAA) receptor and could be potentially used as an anti-depressant with reduced addictive properties.</text>
</comment>
<comment type="similarity">
    <text evidence="8">Belongs to the aromatic-ring hydroxylase family.</text>
</comment>
<name>ASL6_SARSH</name>
<organism>
    <name type="scientific">Sarocladium schorii</name>
    <name type="common">Acremonium strictum (strain IMI 501407)</name>
    <dbReference type="NCBI Taxonomy" id="2203296"/>
    <lineage>
        <taxon>Eukaryota</taxon>
        <taxon>Fungi</taxon>
        <taxon>Dikarya</taxon>
        <taxon>Ascomycota</taxon>
        <taxon>Pezizomycotina</taxon>
        <taxon>Sordariomycetes</taxon>
        <taxon>Hypocreomycetidae</taxon>
        <taxon>Hypocreales</taxon>
        <taxon>Sarocladiaceae</taxon>
        <taxon>Sarocladium</taxon>
    </lineage>
</organism>
<gene>
    <name evidence="7" type="primary">asL6</name>
</gene>
<protein>
    <recommendedName>
        <fullName evidence="7">FAD-dependent monooxygenase asL6</fullName>
        <ecNumber evidence="9">1.14.13.-</ecNumber>
    </recommendedName>
    <alternativeName>
        <fullName evidence="7">Xenovulene A biosynthesis cluster protein L6</fullName>
    </alternativeName>
</protein>
<evidence type="ECO:0000250" key="1">
    <source>
        <dbReference type="UniProtKB" id="D3HKY4"/>
    </source>
</evidence>
<evidence type="ECO:0000255" key="2"/>
<evidence type="ECO:0000269" key="3">
    <source>
    </source>
</evidence>
<evidence type="ECO:0000269" key="4">
    <source>
    </source>
</evidence>
<evidence type="ECO:0000269" key="5">
    <source>
    </source>
</evidence>
<evidence type="ECO:0000269" key="6">
    <source>
    </source>
</evidence>
<evidence type="ECO:0000303" key="7">
    <source>
    </source>
</evidence>
<evidence type="ECO:0000305" key="8"/>
<evidence type="ECO:0000305" key="9">
    <source>
    </source>
</evidence>
<sequence>MTVKILVSGAGVAGTALVNFLCRSKHEYDITVVERAPALRAAGSQLDLKSFGAPLMRKLGLIEKVREKSIHETAFTFVDSKGREWARFPVNEAGKGYEGITSEFEIMRADLVAVLYEASKEVSANPFMKGPQKLRYVFGKHGVHFTQGNSKVNVVFSDGSSDDYDLVVGADGQYSMTRRLLWEPEKGSGDTTLKYTGVTAGFFQMPKSEDEADSTLFKNCLQAGPRGLCLRCAHKDFTQAMLGIPTTDEHKQVFKKPLEQQKQMWEESVGSFKWQGQRVLAELRKSDDFYMTPVAQVKVDRWSKGRVVLVGDAGYCPSVMTGRGTTVSLVGAYVLAGELAKHGDNIDAALESYEKVLRPFITTAQEIPSMGMGMFQSKFGVGVFYVLLAIISKLKIDRLLQALMKEEKETWELPEYPELEFEA</sequence>
<proteinExistence type="evidence at protein level"/>